<reference key="1">
    <citation type="journal article" date="1997" name="Virology">
        <title>Completion of the Lassa fever virus sequence and identification of a RING finger open reading frame at the L RNA 5' End.</title>
        <authorList>
            <person name="Djavani M."/>
            <person name="Lukashevich I.S."/>
            <person name="Sanchez A."/>
            <person name="Nichol S.T."/>
            <person name="Salvato M.S."/>
        </authorList>
    </citation>
    <scope>NUCLEOTIDE SEQUENCE [GENOMIC RNA]</scope>
</reference>
<reference key="2">
    <citation type="submission" date="2004-05" db="EMBL/GenBank/DDBJ databases">
        <authorList>
            <person name="Hajjaj A."/>
            <person name="Chain P.S.G."/>
            <person name="Do L.H."/>
            <person name="Smith K.L."/>
            <person name="Imbro P.M."/>
            <person name="Malfatti S.A."/>
        </authorList>
    </citation>
    <scope>NUCLEOTIDE SEQUENCE [GENOMIC RNA]</scope>
</reference>
<reference key="3">
    <citation type="journal article" date="1998" name="J. Virol.">
        <title>An arenavirus RING (zinc-binding) protein binds the oncoprotein promyelocyte leukemia protein (PML) and relocates PML nuclear bodies to the cytoplasm.</title>
        <authorList>
            <person name="Borden K.L."/>
            <person name="Campbell-Dwyer E.J."/>
            <person name="Salvato M.S."/>
        </authorList>
    </citation>
    <scope>INTERACTION WITH HUMAN PML</scope>
</reference>
<reference key="4">
    <citation type="journal article" date="2003" name="J. Virol.">
        <title>Lassa virus Z protein is a matrix protein and sufficient for the release of virus-like particles.</title>
        <authorList>
            <person name="Strecker T."/>
            <person name="Eichler R."/>
            <person name="Meulen J."/>
            <person name="Weissenhorn W."/>
            <person name="Dieter Klenk H."/>
            <person name="Garten W."/>
            <person name="Lenz O."/>
        </authorList>
    </citation>
    <scope>LATE-BUDDING DOMAIN</scope>
    <scope>FUNCTION</scope>
    <scope>MUTAGENESIS OF 81-PRO--PRO-84 AND 94-PRO--PRO-97</scope>
</reference>
<reference key="5">
    <citation type="journal article" date="2004" name="J. Virol.">
        <title>Cells expressing the RING finger Z protein are resistant to arenavirus infection.</title>
        <authorList>
            <person name="Cornu T.I."/>
            <person name="Feldmann H."/>
            <person name="de la Torre J.C."/>
        </authorList>
    </citation>
    <scope>FUNCTION</scope>
</reference>
<reference key="6">
    <citation type="journal article" date="2004" name="Virus Res.">
        <title>Characterization of the Lassa virus matrix protein Z: electron microscopic study of virus-like particles and interaction with the nucleoprotein (NP).</title>
        <authorList>
            <person name="Eichler R."/>
            <person name="Strecker T."/>
            <person name="Kolesnikova L."/>
            <person name="ter Meulen J."/>
            <person name="Weissenhorn W."/>
            <person name="Becker S."/>
            <person name="Klenk H.D."/>
            <person name="Garten W."/>
            <person name="Lenz O."/>
        </authorList>
    </citation>
    <scope>INTERACTION WITH NP</scope>
</reference>
<reference key="7">
    <citation type="journal article" date="2004" name="J. Virol.">
        <title>Myristoylation of the RING finger Z protein is essential for arenavirus budding.</title>
        <authorList>
            <person name="Perez M."/>
            <person name="Greenwald D.L."/>
            <person name="de la Torre J.C."/>
        </authorList>
    </citation>
    <scope>MYRISTOYLATION AT GLY-2</scope>
    <scope>MUTAGENESIS OF GLY-2</scope>
</reference>
<reference key="8">
    <citation type="journal article" date="2006" name="J. Virol.">
        <title>Cellular factors required for Lassa virus budding.</title>
        <authorList>
            <person name="Urata S."/>
            <person name="Noda T."/>
            <person name="Kawaoka Y."/>
            <person name="Yokosawa H."/>
            <person name="Yasuda J."/>
        </authorList>
    </citation>
    <scope>LATE-BUDDING DOMAIN</scope>
    <scope>INTERACTION WITH HUMAN TSG101</scope>
</reference>
<reference key="9">
    <citation type="journal article" date="2019" name="Viruses">
        <title>Autophagy Promotes Infectious Particle Production of Mopeia and Lassa Viruses.</title>
        <authorList>
            <person name="Baillet N."/>
            <person name="Krieger S."/>
            <person name="Journeaux A."/>
            <person name="Caro V."/>
            <person name="Tangy F."/>
            <person name="Vidalain P.O."/>
            <person name="Baize S."/>
        </authorList>
    </citation>
    <scope>INTERACTION WITH HOST TAX1BP1</scope>
</reference>
<reference key="10">
    <citation type="journal article" date="2010" name="Proc. Natl. Acad. Sci. U.S.A.">
        <title>Structural characterization of the Z RING-eIF4E complex reveals a distinct mode of control for eIF4E.</title>
        <authorList>
            <person name="Volpon L."/>
            <person name="Osborne M.J."/>
            <person name="Capul A.A."/>
            <person name="de la Torre J.C."/>
            <person name="Borden K.L."/>
        </authorList>
    </citation>
    <scope>STRUCTURE BY NMR IN COMPLEX WITH ZINC IONS</scope>
    <scope>INTERACTION WITH HOST EIF4E</scope>
</reference>
<comment type="function">
    <text evidence="1 2 4 5">Plays a crucial role in virion assembly and budding. Expressed late in the virus life cycle, it acts as an inhibitor of viral transcription and RNA synthesis by interacting with the viral polymerase L. Presumably recruits the NP encapsidated genome to cellular membranes at budding sites via direct interaction with NP. Plays critical roles in the final steps of viral release by interacting with host TSG101, a member of the vacuolar protein-sorting pathway and using other cellular host proteins involved in vesicle formation pathway. The budding of the virus progeny occurs after association of protein Z with the viral glycoprotein complex SSP-GP1-GP2 at the cell periphery, step that requires myristoylation of protein Z. Also selectively represses protein production by associating with host eIF4E (By similarity) (PubMed:12970458, PubMed:14990716). In cell-based minigenome assay, has an inhibitory effect on the ribonucleoprotein machinery (vRNP), which is responsible for the replication and transcription of the viral genome (By similarity).</text>
</comment>
<comment type="subunit">
    <text evidence="2 6 8 9 10">Interacts with protein NP; this interaction probably directs the encapsidated genome to budding sites (By similarity). Interacts (via RING domain) with polymerase L; this interaction inhibits viral transcription and replication, Z partially blocks the product exit tunnel for the releasing nascent RNA product. Interacts with the glycoprotein complex; this interaction plays a role in virion budding. Interacts with host eIF4E; this interaction results in eIF4E reduced affinity for its substrate, the 5'-m7 G cap structure. Interacts (via late-budding domain) with host TSG101; this interaction is essential for budding and release of viral particles. Interacts with host RPLP0; this interaction may serve to load ribosome-like particles inside the virion. Interacts with host PML; this interaction induces PML bodies redistribution in the cytoplasm upon viral infection. Interacts with host TAX1BP1 (PubMed:30909570).</text>
</comment>
<comment type="interaction">
    <interactant intactId="EBI-15840965">
        <id>O73557</id>
    </interactant>
    <interactant intactId="EBI-73440">
        <id>P06730</id>
        <label>EIF4E</label>
    </interactant>
    <organismsDiffer>true</organismsDiffer>
    <experiments>3</experiments>
</comment>
<comment type="subcellular location">
    <subcellularLocation>
        <location evidence="2">Virion</location>
    </subcellularLocation>
    <subcellularLocation>
        <location evidence="2">Host cytoplasm</location>
        <location evidence="2">Host perinuclear region</location>
    </subcellularLocation>
    <subcellularLocation>
        <location evidence="2">Host cell membrane</location>
        <topology evidence="2">Lipid-anchor</topology>
        <orientation evidence="2">Cytoplasmic side</orientation>
    </subcellularLocation>
    <text evidence="2">Mainly perinuclear. During budding, associates at the inner side of the plasma membrane of infected cells.</text>
</comment>
<comment type="domain">
    <text evidence="2">Late-budding domains (L domains) are short sequence motifs essential for viral particle budding. They recruit proteins of the host ESCRT machinery (Endosomal Sorting Complex Required for Transport) or ESCRT-associated proteins.</text>
</comment>
<comment type="PTM">
    <text evidence="1">Myristoylation is required for the role of RING finger protein Z in assembly and budding (By similarity).</text>
</comment>
<comment type="miscellaneous">
    <text evidence="1">Inhibition of host myristoylation by the compound DDD85646 leads to proteasomal degradation of protein Z (and not lysosomal), strong inhibition of Z-mediated assembly and budding, and reduced levels of viral replication and transcription.</text>
</comment>
<comment type="similarity">
    <text evidence="2">Belongs to the arenaviridae Z protein family.</text>
</comment>
<keyword id="KW-0002">3D-structure</keyword>
<keyword id="KW-1032">Host cell membrane</keyword>
<keyword id="KW-1035">Host cytoplasm</keyword>
<keyword id="KW-1043">Host membrane</keyword>
<keyword id="KW-0945">Host-virus interaction</keyword>
<keyword id="KW-0449">Lipoprotein</keyword>
<keyword id="KW-0472">Membrane</keyword>
<keyword id="KW-0479">Metal-binding</keyword>
<keyword id="KW-0519">Myristate</keyword>
<keyword id="KW-1185">Reference proteome</keyword>
<keyword id="KW-1198">Viral budding</keyword>
<keyword id="KW-1187">Viral budding via the host ESCRT complexes</keyword>
<keyword id="KW-1188">Viral release from host cell</keyword>
<keyword id="KW-0946">Virion</keyword>
<keyword id="KW-0862">Zinc</keyword>
<keyword id="KW-0863">Zinc-finger</keyword>
<feature type="initiator methionine" description="Removed; by host" evidence="2">
    <location>
        <position position="1"/>
    </location>
</feature>
<feature type="chain" id="PRO_0000079201" description="RING finger protein Z" evidence="2">
    <location>
        <begin position="2"/>
        <end position="99"/>
    </location>
</feature>
<feature type="zinc finger region" description="RING-type; atypical" evidence="2">
    <location>
        <begin position="31"/>
        <end position="67"/>
    </location>
</feature>
<feature type="region of interest" description="Disordered" evidence="3">
    <location>
        <begin position="74"/>
        <end position="99"/>
    </location>
</feature>
<feature type="short sequence motif" description="PTAP/PSAP motif" evidence="2">
    <location>
        <begin position="81"/>
        <end position="84"/>
    </location>
</feature>
<feature type="short sequence motif" description="PPXY motif" evidence="2">
    <location>
        <begin position="94"/>
        <end position="97"/>
    </location>
</feature>
<feature type="compositionally biased region" description="Low complexity" evidence="3">
    <location>
        <begin position="77"/>
        <end position="89"/>
    </location>
</feature>
<feature type="lipid moiety-binding region" description="N-myristoyl glycine; by host" evidence="2 7">
    <location>
        <position position="2"/>
    </location>
</feature>
<feature type="mutagenesis site" description="Complete loss of myristoylation. Complete loss of virion budding." evidence="4 7">
    <original>G</original>
    <variation>A</variation>
    <location>
        <position position="2"/>
    </location>
</feature>
<feature type="mutagenesis site" description="50% decrease of virus budding." evidence="4">
    <original>PTAP</original>
    <variation>ATAA</variation>
    <location>
        <begin position="81"/>
        <end position="84"/>
    </location>
</feature>
<feature type="mutagenesis site" description="90% decrease of virus budding." evidence="4">
    <original>PPPY</original>
    <variation>AAAA</variation>
    <location>
        <begin position="94"/>
        <end position="97"/>
    </location>
</feature>
<feature type="mutagenesis site" description="90% decrease of virus budding.">
    <original>Y</original>
    <variation>A</variation>
    <location>
        <position position="97"/>
    </location>
</feature>
<feature type="strand" evidence="12">
    <location>
        <begin position="28"/>
        <end position="31"/>
    </location>
</feature>
<feature type="turn" evidence="12">
    <location>
        <begin position="32"/>
        <end position="34"/>
    </location>
</feature>
<feature type="strand" evidence="12">
    <location>
        <begin position="39"/>
        <end position="43"/>
    </location>
</feature>
<feature type="strand" evidence="12">
    <location>
        <begin position="45"/>
        <end position="50"/>
    </location>
</feature>
<feature type="helix" evidence="12">
    <location>
        <begin position="51"/>
        <end position="60"/>
    </location>
</feature>
<feature type="strand" evidence="11">
    <location>
        <begin position="61"/>
        <end position="64"/>
    </location>
</feature>
<feature type="turn" evidence="12">
    <location>
        <begin position="65"/>
        <end position="67"/>
    </location>
</feature>
<feature type="strand" evidence="12">
    <location>
        <begin position="68"/>
        <end position="70"/>
    </location>
</feature>
<organismHost>
    <name type="scientific">Homo sapiens</name>
    <name type="common">Human</name>
    <dbReference type="NCBI Taxonomy" id="9606"/>
</organismHost>
<organismHost>
    <name type="scientific">Mastomys natalensis</name>
    <name type="common">African soft-furred rat</name>
    <name type="synonym">Praomys natalensis</name>
    <dbReference type="NCBI Taxonomy" id="10112"/>
</organismHost>
<organism>
    <name type="scientific">Lassa virus (strain Mouse/Sierra Leone/Josiah/1976)</name>
    <name type="common">LASV</name>
    <dbReference type="NCBI Taxonomy" id="11622"/>
    <lineage>
        <taxon>Viruses</taxon>
        <taxon>Riboviria</taxon>
        <taxon>Orthornavirae</taxon>
        <taxon>Negarnaviricota</taxon>
        <taxon>Polyploviricotina</taxon>
        <taxon>Ellioviricetes</taxon>
        <taxon>Bunyavirales</taxon>
        <taxon>Arenaviridae</taxon>
        <taxon>Mammarenavirus</taxon>
        <taxon>Mammarenavirus lassaense</taxon>
    </lineage>
</organism>
<sequence>MGNKQAKAPESKDSPRASLIPDATHLGPQFCKSCWFENKGLVECNNHYLCLNCLTLLLSVSNRCPICKMPLPTKLRPSAAPTAPPTGAADSIRPPPYSP</sequence>
<accession>O73557</accession>
<gene>
    <name evidence="2" type="primary">Z</name>
</gene>
<proteinExistence type="evidence at protein level"/>
<evidence type="ECO:0000250" key="1">
    <source>
        <dbReference type="UniProtKB" id="P18541"/>
    </source>
</evidence>
<evidence type="ECO:0000255" key="2">
    <source>
        <dbReference type="HAMAP-Rule" id="MF_04087"/>
    </source>
</evidence>
<evidence type="ECO:0000256" key="3">
    <source>
        <dbReference type="SAM" id="MobiDB-lite"/>
    </source>
</evidence>
<evidence type="ECO:0000269" key="4">
    <source>
    </source>
</evidence>
<evidence type="ECO:0000269" key="5">
    <source>
    </source>
</evidence>
<evidence type="ECO:0000269" key="6">
    <source>
    </source>
</evidence>
<evidence type="ECO:0000269" key="7">
    <source>
    </source>
</evidence>
<evidence type="ECO:0000269" key="8">
    <source>
    </source>
</evidence>
<evidence type="ECO:0000269" key="9">
    <source>
    </source>
</evidence>
<evidence type="ECO:0000269" key="10">
    <source>
    </source>
</evidence>
<evidence type="ECO:0007829" key="11">
    <source>
        <dbReference type="PDB" id="2M1S"/>
    </source>
</evidence>
<evidence type="ECO:0007829" key="12">
    <source>
        <dbReference type="PDB" id="5I72"/>
    </source>
</evidence>
<dbReference type="EMBL" id="U73035">
    <property type="protein sequence ID" value="AAC05818.2"/>
    <property type="molecule type" value="Genomic_RNA"/>
</dbReference>
<dbReference type="EMBL" id="U73034">
    <property type="protein sequence ID" value="AAC05816.2"/>
    <property type="molecule type" value="Genomic_RNA"/>
</dbReference>
<dbReference type="EMBL" id="AY628202">
    <property type="protein sequence ID" value="AAT49001.1"/>
    <property type="molecule type" value="Genomic_RNA"/>
</dbReference>
<dbReference type="RefSeq" id="NP_694871.1">
    <property type="nucleotide sequence ID" value="NC_004297.1"/>
</dbReference>
<dbReference type="PDB" id="2M1S">
    <property type="method" value="NMR"/>
    <property type="chains" value="A=1-99"/>
</dbReference>
<dbReference type="PDB" id="5I72">
    <property type="method" value="X-ray"/>
    <property type="resolution" value="2.90 A"/>
    <property type="chains" value="A/B=25-77"/>
</dbReference>
<dbReference type="PDBsum" id="2M1S"/>
<dbReference type="PDBsum" id="5I72"/>
<dbReference type="BMRB" id="O73557"/>
<dbReference type="SMR" id="O73557"/>
<dbReference type="DIP" id="DIP-58625N"/>
<dbReference type="ELM" id="O73557"/>
<dbReference type="IntAct" id="O73557">
    <property type="interactions" value="1"/>
</dbReference>
<dbReference type="iPTMnet" id="O73557"/>
<dbReference type="KEGG" id="vg:956586"/>
<dbReference type="EvolutionaryTrace" id="O73557"/>
<dbReference type="Proteomes" id="UP000002473">
    <property type="component" value="Genome"/>
</dbReference>
<dbReference type="Proteomes" id="UP000162624">
    <property type="component" value="Genome"/>
</dbReference>
<dbReference type="GO" id="GO:0044220">
    <property type="term" value="C:host cell perinuclear region of cytoplasm"/>
    <property type="evidence" value="ECO:0007669"/>
    <property type="project" value="UniProtKB-SubCell"/>
</dbReference>
<dbReference type="GO" id="GO:0020002">
    <property type="term" value="C:host cell plasma membrane"/>
    <property type="evidence" value="ECO:0007669"/>
    <property type="project" value="UniProtKB-SubCell"/>
</dbReference>
<dbReference type="GO" id="GO:0016020">
    <property type="term" value="C:membrane"/>
    <property type="evidence" value="ECO:0007669"/>
    <property type="project" value="UniProtKB-UniRule"/>
</dbReference>
<dbReference type="GO" id="GO:0044423">
    <property type="term" value="C:virion component"/>
    <property type="evidence" value="ECO:0007669"/>
    <property type="project" value="UniProtKB-UniRule"/>
</dbReference>
<dbReference type="GO" id="GO:0003723">
    <property type="term" value="F:RNA binding"/>
    <property type="evidence" value="ECO:0007669"/>
    <property type="project" value="UniProtKB-UniRule"/>
</dbReference>
<dbReference type="GO" id="GO:0008270">
    <property type="term" value="F:zinc ion binding"/>
    <property type="evidence" value="ECO:0007669"/>
    <property type="project" value="UniProtKB-UniRule"/>
</dbReference>
<dbReference type="GO" id="GO:0046761">
    <property type="term" value="P:viral budding from plasma membrane"/>
    <property type="evidence" value="ECO:0000314"/>
    <property type="project" value="UniProtKB"/>
</dbReference>
<dbReference type="GO" id="GO:0039702">
    <property type="term" value="P:viral budding via host ESCRT complex"/>
    <property type="evidence" value="ECO:0007669"/>
    <property type="project" value="UniProtKB-UniRule"/>
</dbReference>
<dbReference type="DisProt" id="DP00820"/>
<dbReference type="FunFam" id="3.30.160.310:FF:000001">
    <property type="entry name" value="RING finger protein Z"/>
    <property type="match status" value="1"/>
</dbReference>
<dbReference type="Gene3D" id="3.30.160.310">
    <property type="match status" value="1"/>
</dbReference>
<dbReference type="HAMAP" id="MF_04087">
    <property type="entry name" value="ARENA_Z"/>
    <property type="match status" value="1"/>
</dbReference>
<dbReference type="InterPro" id="IPR024183">
    <property type="entry name" value="RING_finger_Z_arenaviridae"/>
</dbReference>
<dbReference type="InterPro" id="IPR038485">
    <property type="entry name" value="Z_RING-type_Znf_sf"/>
</dbReference>
<dbReference type="InterPro" id="IPR003224">
    <property type="entry name" value="Z_RING_Znf"/>
</dbReference>
<dbReference type="Pfam" id="PF03854">
    <property type="entry name" value="zf-P11"/>
    <property type="match status" value="1"/>
</dbReference>
<dbReference type="PIRSF" id="PIRSF004030">
    <property type="entry name" value="Z_ArenaV"/>
    <property type="match status" value="1"/>
</dbReference>
<dbReference type="SUPFAM" id="SSF57850">
    <property type="entry name" value="RING/U-box"/>
    <property type="match status" value="1"/>
</dbReference>
<protein>
    <recommendedName>
        <fullName evidence="2">RING finger protein Z</fullName>
        <shortName evidence="2">Protein Z</shortName>
    </recommendedName>
    <alternativeName>
        <fullName evidence="2">Zinc-binding protein</fullName>
    </alternativeName>
</protein>
<name>Z_LASSJ</name>